<accession>Q3V4Q4</accession>
<name>Y892_ATV</name>
<dbReference type="EMBL" id="AJ888457">
    <property type="protein sequence ID" value="CAI59910.1"/>
    <property type="molecule type" value="Genomic_DNA"/>
</dbReference>
<dbReference type="RefSeq" id="YP_319892.1">
    <property type="nucleotide sequence ID" value="NC_007409.1"/>
</dbReference>
<dbReference type="SMR" id="Q3V4Q4"/>
<dbReference type="GeneID" id="4484266"/>
<dbReference type="KEGG" id="vg:4484266"/>
<dbReference type="Proteomes" id="UP000002150">
    <property type="component" value="Genome"/>
</dbReference>
<dbReference type="CDD" id="cd00198">
    <property type="entry name" value="vWFA"/>
    <property type="match status" value="1"/>
</dbReference>
<dbReference type="Gene3D" id="3.40.50.410">
    <property type="entry name" value="von Willebrand factor, type A domain"/>
    <property type="match status" value="1"/>
</dbReference>
<dbReference type="InterPro" id="IPR002035">
    <property type="entry name" value="VWF_A"/>
</dbReference>
<dbReference type="InterPro" id="IPR036465">
    <property type="entry name" value="vWFA_dom_sf"/>
</dbReference>
<dbReference type="Pfam" id="PF00092">
    <property type="entry name" value="VWA"/>
    <property type="match status" value="1"/>
</dbReference>
<dbReference type="SMART" id="SM00327">
    <property type="entry name" value="VWA"/>
    <property type="match status" value="1"/>
</dbReference>
<dbReference type="SUPFAM" id="SSF53300">
    <property type="entry name" value="vWA-like"/>
    <property type="match status" value="1"/>
</dbReference>
<dbReference type="PROSITE" id="PS50234">
    <property type="entry name" value="VWFA"/>
    <property type="match status" value="1"/>
</dbReference>
<keyword id="KW-0175">Coiled coil</keyword>
<keyword id="KW-1185">Reference proteome</keyword>
<sequence length="892" mass="97551">MSVDQDVVDEAYQYYAEDKRQISDKARKFIEFIDPILRKYSKLFRYYQNFAKFTLEYYYKLFYPFLEKLPENVVEDLKRQIINEIMSNPNQSIRDVLAKAVQKEAQRIEEQLQRRPQRAKQQPQKTKTSEVANQRVSRSAENQGKRGNEEKQQQKTPGKTEEASGAEQESGEEGNQQEESGEEQEGVKGSRSKQREEQEEEVSESEGKQSEESGESESEEGQSSEETQLSSSGEGNQQEEGKGGEGEGAETEEGGRRGEAESEQEEGEETGNGQESSGEAQNGGESGESEGEITESESASEEQTGSKGKSGQQGEEGQQQSGSEGEEGAEQEESGEEGNQQEGVGKQKKRSSRGQESEAGEEPGSAPEETQLSSGEEEAGQESGGETGSEQGFGEEGEQGQESETTGKQKGKKREATESGGGAESESEEGQSPEETQEGGEGGAETEEGGQGSEAEGTAAEGEVGQPSEQGVSSSTGSGQRSEGSEASEEQNAGESGEGSESEGAESIAGEQTGSSSESAGSEQLGSQQGELSLEEGGRGYAHGDEDLLSSPQEINSILQTLSQLRDTVQQLRNYDFYSNAIDERTFDDQNVSEHRKEKEIENLYDTANNVQKLLKDLNVSEGEQNKILQELVTQYSLRRLLGNIATKYKGLLDFVRNKGESEVESRHGSGKGPSSTMGDDLSRLFIKEYAKLSNPIQQKMFLLDYLNGALSIHKSEEKKQGDFLFVIDSSGSMEGNKIATALAIPLVTYKKYKGKRNILVETFSDEPSPIYNIKNIANVLGSMKFGGTNIGSAVLYALKNIDKPDSDYDRKLRESLRKTRTLILLTDGEDEIPDDIAREINSLKKKNKVELLCYGIDLGERGLKTLKEICDEVYAVGSNNFGNIVLKRLVH</sequence>
<reference key="1">
    <citation type="journal article" date="2005" name="Nature">
        <title>Virology: independent virus development outside a host.</title>
        <authorList>
            <person name="Haring M."/>
            <person name="Vestergaard G."/>
            <person name="Rachel R."/>
            <person name="Chen L."/>
            <person name="Garrett R.A."/>
            <person name="Prangishvili D."/>
        </authorList>
    </citation>
    <scope>NUCLEOTIDE SEQUENCE [GENOMIC DNA]</scope>
</reference>
<evidence type="ECO:0000255" key="1"/>
<evidence type="ECO:0000255" key="2">
    <source>
        <dbReference type="PROSITE-ProRule" id="PRU00219"/>
    </source>
</evidence>
<evidence type="ECO:0000256" key="3">
    <source>
        <dbReference type="SAM" id="MobiDB-lite"/>
    </source>
</evidence>
<feature type="chain" id="PRO_0000389166" description="Putative VWFA domain-containing protein ORF892">
    <location>
        <begin position="1"/>
        <end position="892"/>
    </location>
</feature>
<feature type="domain" description="VWFA" evidence="2">
    <location>
        <begin position="723"/>
        <end position="892"/>
    </location>
</feature>
<feature type="region of interest" description="Disordered" evidence="3">
    <location>
        <begin position="109"/>
        <end position="548"/>
    </location>
</feature>
<feature type="coiled-coil region" evidence="1">
    <location>
        <begin position="553"/>
        <end position="620"/>
    </location>
</feature>
<feature type="compositionally biased region" description="Polar residues" evidence="3">
    <location>
        <begin position="129"/>
        <end position="142"/>
    </location>
</feature>
<feature type="compositionally biased region" description="Basic and acidic residues" evidence="3">
    <location>
        <begin position="143"/>
        <end position="162"/>
    </location>
</feature>
<feature type="compositionally biased region" description="Acidic residues" evidence="3">
    <location>
        <begin position="169"/>
        <end position="184"/>
    </location>
</feature>
<feature type="compositionally biased region" description="Basic and acidic residues" evidence="3">
    <location>
        <begin position="185"/>
        <end position="196"/>
    </location>
</feature>
<feature type="compositionally biased region" description="Acidic residues" evidence="3">
    <location>
        <begin position="212"/>
        <end position="223"/>
    </location>
</feature>
<feature type="compositionally biased region" description="Low complexity" evidence="3">
    <location>
        <begin position="224"/>
        <end position="238"/>
    </location>
</feature>
<feature type="compositionally biased region" description="Low complexity" evidence="3">
    <location>
        <begin position="271"/>
        <end position="283"/>
    </location>
</feature>
<feature type="compositionally biased region" description="Acidic residues" evidence="3">
    <location>
        <begin position="287"/>
        <end position="300"/>
    </location>
</feature>
<feature type="compositionally biased region" description="Low complexity" evidence="3">
    <location>
        <begin position="301"/>
        <end position="323"/>
    </location>
</feature>
<feature type="compositionally biased region" description="Acidic residues" evidence="3">
    <location>
        <begin position="324"/>
        <end position="336"/>
    </location>
</feature>
<feature type="compositionally biased region" description="Acidic residues" evidence="3">
    <location>
        <begin position="425"/>
        <end position="448"/>
    </location>
</feature>
<feature type="compositionally biased region" description="Low complexity" evidence="3">
    <location>
        <begin position="453"/>
        <end position="466"/>
    </location>
</feature>
<feature type="compositionally biased region" description="Polar residues" evidence="3">
    <location>
        <begin position="467"/>
        <end position="481"/>
    </location>
</feature>
<feature type="compositionally biased region" description="Polar residues" evidence="3">
    <location>
        <begin position="512"/>
        <end position="531"/>
    </location>
</feature>
<feature type="compositionally biased region" description="Basic and acidic residues" evidence="3">
    <location>
        <begin position="536"/>
        <end position="546"/>
    </location>
</feature>
<protein>
    <recommendedName>
        <fullName>Putative VWFA domain-containing protein ORF892</fullName>
    </recommendedName>
</protein>
<organism>
    <name type="scientific">Acidianus two-tailed virus</name>
    <name type="common">ATV</name>
    <dbReference type="NCBI Taxonomy" id="315953"/>
    <lineage>
        <taxon>Viruses</taxon>
        <taxon>Viruses incertae sedis</taxon>
        <taxon>Bicaudaviridae</taxon>
        <taxon>Bicaudavirus</taxon>
    </lineage>
</organism>
<proteinExistence type="predicted"/>
<organismHost>
    <name type="scientific">Acidianus convivator</name>
    <dbReference type="NCBI Taxonomy" id="269667"/>
</organismHost>